<organism>
    <name type="scientific">Salmonella paratyphi A (strain ATCC 9150 / SARB42)</name>
    <dbReference type="NCBI Taxonomy" id="295319"/>
    <lineage>
        <taxon>Bacteria</taxon>
        <taxon>Pseudomonadati</taxon>
        <taxon>Pseudomonadota</taxon>
        <taxon>Gammaproteobacteria</taxon>
        <taxon>Enterobacterales</taxon>
        <taxon>Enterobacteriaceae</taxon>
        <taxon>Salmonella</taxon>
    </lineage>
</organism>
<feature type="chain" id="PRO_0000364692" description="Fructose-1,6-bisphosphatase class 1">
    <location>
        <begin position="1"/>
        <end position="332"/>
    </location>
</feature>
<feature type="binding site" evidence="1">
    <location>
        <position position="89"/>
    </location>
    <ligand>
        <name>Mg(2+)</name>
        <dbReference type="ChEBI" id="CHEBI:18420"/>
        <label>1</label>
    </ligand>
</feature>
<feature type="binding site" evidence="1">
    <location>
        <position position="110"/>
    </location>
    <ligand>
        <name>Mg(2+)</name>
        <dbReference type="ChEBI" id="CHEBI:18420"/>
        <label>1</label>
    </ligand>
</feature>
<feature type="binding site" evidence="1">
    <location>
        <position position="110"/>
    </location>
    <ligand>
        <name>Mg(2+)</name>
        <dbReference type="ChEBI" id="CHEBI:18420"/>
        <label>2</label>
    </ligand>
</feature>
<feature type="binding site" evidence="1">
    <location>
        <position position="112"/>
    </location>
    <ligand>
        <name>Mg(2+)</name>
        <dbReference type="ChEBI" id="CHEBI:18420"/>
        <label>1</label>
    </ligand>
</feature>
<feature type="binding site" evidence="1">
    <location>
        <begin position="113"/>
        <end position="116"/>
    </location>
    <ligand>
        <name>substrate</name>
    </ligand>
</feature>
<feature type="binding site" evidence="1">
    <location>
        <position position="113"/>
    </location>
    <ligand>
        <name>Mg(2+)</name>
        <dbReference type="ChEBI" id="CHEBI:18420"/>
        <label>2</label>
    </ligand>
</feature>
<feature type="binding site" evidence="1">
    <location>
        <position position="206"/>
    </location>
    <ligand>
        <name>substrate</name>
    </ligand>
</feature>
<feature type="binding site" evidence="1">
    <location>
        <position position="239"/>
    </location>
    <ligand>
        <name>substrate</name>
    </ligand>
</feature>
<feature type="binding site" evidence="1">
    <location>
        <begin position="257"/>
        <end position="259"/>
    </location>
    <ligand>
        <name>substrate</name>
    </ligand>
</feature>
<feature type="binding site" evidence="1">
    <location>
        <position position="269"/>
    </location>
    <ligand>
        <name>substrate</name>
    </ligand>
</feature>
<feature type="binding site" evidence="1">
    <location>
        <position position="275"/>
    </location>
    <ligand>
        <name>Mg(2+)</name>
        <dbReference type="ChEBI" id="CHEBI:18420"/>
        <label>2</label>
    </ligand>
</feature>
<gene>
    <name evidence="1" type="primary">fbp</name>
    <name type="ordered locus">SPA4235</name>
</gene>
<sequence length="332" mass="36799">MKTLGEFIVEKQHEFSQATGELTALLSAIKLGAKIIHRDINKAGLVDILGASGAENVQGEVQQKLDLFANEKLKAALKARDIVAGIASEEEDEIVVFEGCEHAKYVVLMDPLDGSSNIDVNVSVGTIFSIYRRVTPVGTPVTEEDFLQPGNKQVAAGYVVYGSSTMLVYTTGCGVHAFTYDPSLGVFCLCQERMRFPEKGKTYSINEGNYIKFPNGVKKYIKFCQEEDSSTSRPYTSRYIGSLVADFHRNLLKGGIYLYPSTASHPQGKLRLLYECNPMAFLAEQAGGKASDGKERILDIIPESLHQRRSFFVGNRHMVDDVERFIREYPDA</sequence>
<reference key="1">
    <citation type="journal article" date="2004" name="Nat. Genet.">
        <title>Comparison of genome degradation in Paratyphi A and Typhi, human-restricted serovars of Salmonella enterica that cause typhoid.</title>
        <authorList>
            <person name="McClelland M."/>
            <person name="Sanderson K.E."/>
            <person name="Clifton S.W."/>
            <person name="Latreille P."/>
            <person name="Porwollik S."/>
            <person name="Sabo A."/>
            <person name="Meyer R."/>
            <person name="Bieri T."/>
            <person name="Ozersky P."/>
            <person name="McLellan M."/>
            <person name="Harkins C.R."/>
            <person name="Wang C."/>
            <person name="Nguyen C."/>
            <person name="Berghoff A."/>
            <person name="Elliott G."/>
            <person name="Kohlberg S."/>
            <person name="Strong C."/>
            <person name="Du F."/>
            <person name="Carter J."/>
            <person name="Kremizki C."/>
            <person name="Layman D."/>
            <person name="Leonard S."/>
            <person name="Sun H."/>
            <person name="Fulton L."/>
            <person name="Nash W."/>
            <person name="Miner T."/>
            <person name="Minx P."/>
            <person name="Delehaunty K."/>
            <person name="Fronick C."/>
            <person name="Magrini V."/>
            <person name="Nhan M."/>
            <person name="Warren W."/>
            <person name="Florea L."/>
            <person name="Spieth J."/>
            <person name="Wilson R.K."/>
        </authorList>
    </citation>
    <scope>NUCLEOTIDE SEQUENCE [LARGE SCALE GENOMIC DNA]</scope>
    <source>
        <strain>ATCC 9150 / SARB42</strain>
    </source>
</reference>
<keyword id="KW-0119">Carbohydrate metabolism</keyword>
<keyword id="KW-0963">Cytoplasm</keyword>
<keyword id="KW-0378">Hydrolase</keyword>
<keyword id="KW-0460">Magnesium</keyword>
<keyword id="KW-0479">Metal-binding</keyword>
<proteinExistence type="inferred from homology"/>
<accession>Q5PJ74</accession>
<name>F16PA_SALPA</name>
<protein>
    <recommendedName>
        <fullName evidence="1">Fructose-1,6-bisphosphatase class 1</fullName>
        <shortName evidence="1">FBPase class 1</shortName>
        <ecNumber evidence="1">3.1.3.11</ecNumber>
    </recommendedName>
    <alternativeName>
        <fullName evidence="1">D-fructose-1,6-bisphosphate 1-phosphohydrolase class 1</fullName>
    </alternativeName>
</protein>
<dbReference type="EC" id="3.1.3.11" evidence="1"/>
<dbReference type="EMBL" id="CP000026">
    <property type="protein sequence ID" value="AAV79971.1"/>
    <property type="molecule type" value="Genomic_DNA"/>
</dbReference>
<dbReference type="RefSeq" id="WP_000853764.1">
    <property type="nucleotide sequence ID" value="NC_006511.1"/>
</dbReference>
<dbReference type="SMR" id="Q5PJ74"/>
<dbReference type="KEGG" id="spt:SPA4235"/>
<dbReference type="HOGENOM" id="CLU_039977_2_2_6"/>
<dbReference type="UniPathway" id="UPA00138"/>
<dbReference type="Proteomes" id="UP000008185">
    <property type="component" value="Chromosome"/>
</dbReference>
<dbReference type="GO" id="GO:0005829">
    <property type="term" value="C:cytosol"/>
    <property type="evidence" value="ECO:0007669"/>
    <property type="project" value="TreeGrafter"/>
</dbReference>
<dbReference type="GO" id="GO:0042132">
    <property type="term" value="F:fructose 1,6-bisphosphate 1-phosphatase activity"/>
    <property type="evidence" value="ECO:0007669"/>
    <property type="project" value="UniProtKB-UniRule"/>
</dbReference>
<dbReference type="GO" id="GO:0000287">
    <property type="term" value="F:magnesium ion binding"/>
    <property type="evidence" value="ECO:0007669"/>
    <property type="project" value="UniProtKB-UniRule"/>
</dbReference>
<dbReference type="GO" id="GO:0030388">
    <property type="term" value="P:fructose 1,6-bisphosphate metabolic process"/>
    <property type="evidence" value="ECO:0007669"/>
    <property type="project" value="TreeGrafter"/>
</dbReference>
<dbReference type="GO" id="GO:0006002">
    <property type="term" value="P:fructose 6-phosphate metabolic process"/>
    <property type="evidence" value="ECO:0007669"/>
    <property type="project" value="TreeGrafter"/>
</dbReference>
<dbReference type="GO" id="GO:0006000">
    <property type="term" value="P:fructose metabolic process"/>
    <property type="evidence" value="ECO:0007669"/>
    <property type="project" value="TreeGrafter"/>
</dbReference>
<dbReference type="GO" id="GO:0006094">
    <property type="term" value="P:gluconeogenesis"/>
    <property type="evidence" value="ECO:0007669"/>
    <property type="project" value="UniProtKB-UniRule"/>
</dbReference>
<dbReference type="GO" id="GO:0005986">
    <property type="term" value="P:sucrose biosynthetic process"/>
    <property type="evidence" value="ECO:0007669"/>
    <property type="project" value="TreeGrafter"/>
</dbReference>
<dbReference type="CDD" id="cd00354">
    <property type="entry name" value="FBPase"/>
    <property type="match status" value="1"/>
</dbReference>
<dbReference type="FunFam" id="3.30.540.10:FF:000002">
    <property type="entry name" value="Fructose-1,6-bisphosphatase class 1"/>
    <property type="match status" value="1"/>
</dbReference>
<dbReference type="FunFam" id="3.40.190.80:FF:000001">
    <property type="entry name" value="Fructose-1,6-bisphosphatase class 1"/>
    <property type="match status" value="1"/>
</dbReference>
<dbReference type="Gene3D" id="3.40.190.80">
    <property type="match status" value="1"/>
</dbReference>
<dbReference type="Gene3D" id="3.30.540.10">
    <property type="entry name" value="Fructose-1,6-Bisphosphatase, subunit A, domain 1"/>
    <property type="match status" value="1"/>
</dbReference>
<dbReference type="HAMAP" id="MF_01855">
    <property type="entry name" value="FBPase_class1"/>
    <property type="match status" value="1"/>
</dbReference>
<dbReference type="InterPro" id="IPR044015">
    <property type="entry name" value="FBPase_C_dom"/>
</dbReference>
<dbReference type="InterPro" id="IPR000146">
    <property type="entry name" value="FBPase_class-1"/>
</dbReference>
<dbReference type="InterPro" id="IPR033391">
    <property type="entry name" value="FBPase_N"/>
</dbReference>
<dbReference type="InterPro" id="IPR028343">
    <property type="entry name" value="FBPtase"/>
</dbReference>
<dbReference type="InterPro" id="IPR020548">
    <property type="entry name" value="Fructose_bisphosphatase_AS"/>
</dbReference>
<dbReference type="NCBIfam" id="NF006778">
    <property type="entry name" value="PRK09293.1-1"/>
    <property type="match status" value="1"/>
</dbReference>
<dbReference type="NCBIfam" id="NF006779">
    <property type="entry name" value="PRK09293.1-3"/>
    <property type="match status" value="1"/>
</dbReference>
<dbReference type="PANTHER" id="PTHR11556">
    <property type="entry name" value="FRUCTOSE-1,6-BISPHOSPHATASE-RELATED"/>
    <property type="match status" value="1"/>
</dbReference>
<dbReference type="PANTHER" id="PTHR11556:SF35">
    <property type="entry name" value="SEDOHEPTULOSE-1,7-BISPHOSPHATASE, CHLOROPLASTIC"/>
    <property type="match status" value="1"/>
</dbReference>
<dbReference type="Pfam" id="PF00316">
    <property type="entry name" value="FBPase"/>
    <property type="match status" value="1"/>
</dbReference>
<dbReference type="Pfam" id="PF18913">
    <property type="entry name" value="FBPase_C"/>
    <property type="match status" value="1"/>
</dbReference>
<dbReference type="PIRSF" id="PIRSF500210">
    <property type="entry name" value="FBPtase"/>
    <property type="match status" value="1"/>
</dbReference>
<dbReference type="PIRSF" id="PIRSF000904">
    <property type="entry name" value="FBPtase_SBPase"/>
    <property type="match status" value="1"/>
</dbReference>
<dbReference type="PRINTS" id="PR00115">
    <property type="entry name" value="F16BPHPHTASE"/>
</dbReference>
<dbReference type="SUPFAM" id="SSF56655">
    <property type="entry name" value="Carbohydrate phosphatase"/>
    <property type="match status" value="1"/>
</dbReference>
<dbReference type="PROSITE" id="PS00124">
    <property type="entry name" value="FBPASE"/>
    <property type="match status" value="1"/>
</dbReference>
<comment type="catalytic activity">
    <reaction evidence="1">
        <text>beta-D-fructose 1,6-bisphosphate + H2O = beta-D-fructose 6-phosphate + phosphate</text>
        <dbReference type="Rhea" id="RHEA:11064"/>
        <dbReference type="ChEBI" id="CHEBI:15377"/>
        <dbReference type="ChEBI" id="CHEBI:32966"/>
        <dbReference type="ChEBI" id="CHEBI:43474"/>
        <dbReference type="ChEBI" id="CHEBI:57634"/>
        <dbReference type="EC" id="3.1.3.11"/>
    </reaction>
</comment>
<comment type="cofactor">
    <cofactor evidence="1">
        <name>Mg(2+)</name>
        <dbReference type="ChEBI" id="CHEBI:18420"/>
    </cofactor>
    <text evidence="1">Binds 2 magnesium ions per subunit.</text>
</comment>
<comment type="pathway">
    <text evidence="1">Carbohydrate biosynthesis; gluconeogenesis.</text>
</comment>
<comment type="subunit">
    <text evidence="1">Homotetramer.</text>
</comment>
<comment type="subcellular location">
    <subcellularLocation>
        <location evidence="1">Cytoplasm</location>
    </subcellularLocation>
</comment>
<comment type="similarity">
    <text evidence="1">Belongs to the FBPase class 1 family.</text>
</comment>
<evidence type="ECO:0000255" key="1">
    <source>
        <dbReference type="HAMAP-Rule" id="MF_01855"/>
    </source>
</evidence>